<keyword id="KW-0028">Amino-acid biosynthesis</keyword>
<keyword id="KW-0963">Cytoplasm</keyword>
<keyword id="KW-0368">Histidine biosynthesis</keyword>
<keyword id="KW-0378">Hydrolase</keyword>
<keyword id="KW-0456">Lyase</keyword>
<keyword id="KW-0460">Magnesium</keyword>
<keyword id="KW-0479">Metal-binding</keyword>
<keyword id="KW-0511">Multifunctional enzyme</keyword>
<reference key="1">
    <citation type="journal article" date="2010" name="J. Bacteriol.">
        <title>Whole genome sequences of two Xylella fastidiosa strains (M12 and M23) causing almond leaf scorch disease in California.</title>
        <authorList>
            <person name="Chen J."/>
            <person name="Xie G."/>
            <person name="Han S."/>
            <person name="Chertkov O."/>
            <person name="Sims D."/>
            <person name="Civerolo E.L."/>
        </authorList>
    </citation>
    <scope>NUCLEOTIDE SEQUENCE [LARGE SCALE GENOMIC DNA]</scope>
    <source>
        <strain>M23</strain>
    </source>
</reference>
<organism>
    <name type="scientific">Xylella fastidiosa (strain M23)</name>
    <dbReference type="NCBI Taxonomy" id="405441"/>
    <lineage>
        <taxon>Bacteria</taxon>
        <taxon>Pseudomonadati</taxon>
        <taxon>Pseudomonadota</taxon>
        <taxon>Gammaproteobacteria</taxon>
        <taxon>Lysobacterales</taxon>
        <taxon>Lysobacteraceae</taxon>
        <taxon>Xylella</taxon>
    </lineage>
</organism>
<sequence length="375" mass="41472">MTPIVFIDRDGTLIEEPPDFQIDAYEKLRLVNGVIPALLKLRDAGYHFVIVTNQDGLGSPTYPQASFDGPNALMLQIFSSQGIVFRDVLIDRSWPADNAPTRKPGIGLMVAYLQDRDIDWARSAMVGDRPTDLQFAENLNIRGFQLRTPQFGGDWDWDGIAHTLADAPRRAVVQRHTKETNIRVEIDLDGAPQARITTGLPFFDHMLEQIAKHAGISLHISAVGDLHIDEHHTIEDTGLALGQAVRQALGDKRGIGRYGFDPPQLPWQVSGAAAHGGFTLPMDETQASAVLDFSGRPYFVFEGTFVRERVGDMPTELVPHFFRSLCDASGMNLHLSVHGDNDHHKVEACFKALARALRQALQRHGHVLPSTKGAL</sequence>
<proteinExistence type="inferred from homology"/>
<evidence type="ECO:0000255" key="1">
    <source>
        <dbReference type="HAMAP-Rule" id="MF_01022"/>
    </source>
</evidence>
<dbReference type="EC" id="3.1.3.15" evidence="1"/>
<dbReference type="EC" id="4.2.1.19" evidence="1"/>
<dbReference type="EMBL" id="CP001011">
    <property type="protein sequence ID" value="ACB92768.1"/>
    <property type="molecule type" value="Genomic_DNA"/>
</dbReference>
<dbReference type="RefSeq" id="WP_004088316.1">
    <property type="nucleotide sequence ID" value="NC_010577.1"/>
</dbReference>
<dbReference type="SMR" id="B2I5X9"/>
<dbReference type="GeneID" id="93905076"/>
<dbReference type="KEGG" id="xfn:XfasM23_1350"/>
<dbReference type="HOGENOM" id="CLU_044308_0_0_6"/>
<dbReference type="UniPathway" id="UPA00031">
    <property type="reaction ID" value="UER00011"/>
</dbReference>
<dbReference type="UniPathway" id="UPA00031">
    <property type="reaction ID" value="UER00013"/>
</dbReference>
<dbReference type="Proteomes" id="UP000001698">
    <property type="component" value="Chromosome"/>
</dbReference>
<dbReference type="GO" id="GO:0005737">
    <property type="term" value="C:cytoplasm"/>
    <property type="evidence" value="ECO:0007669"/>
    <property type="project" value="UniProtKB-SubCell"/>
</dbReference>
<dbReference type="GO" id="GO:0004401">
    <property type="term" value="F:histidinol-phosphatase activity"/>
    <property type="evidence" value="ECO:0007669"/>
    <property type="project" value="UniProtKB-UniRule"/>
</dbReference>
<dbReference type="GO" id="GO:0004424">
    <property type="term" value="F:imidazoleglycerol-phosphate dehydratase activity"/>
    <property type="evidence" value="ECO:0007669"/>
    <property type="project" value="UniProtKB-UniRule"/>
</dbReference>
<dbReference type="GO" id="GO:0046872">
    <property type="term" value="F:metal ion binding"/>
    <property type="evidence" value="ECO:0007669"/>
    <property type="project" value="UniProtKB-KW"/>
</dbReference>
<dbReference type="GO" id="GO:0000105">
    <property type="term" value="P:L-histidine biosynthetic process"/>
    <property type="evidence" value="ECO:0007669"/>
    <property type="project" value="UniProtKB-UniRule"/>
</dbReference>
<dbReference type="CDD" id="cd07503">
    <property type="entry name" value="HAD_HisB-N"/>
    <property type="match status" value="1"/>
</dbReference>
<dbReference type="CDD" id="cd07914">
    <property type="entry name" value="IGPD"/>
    <property type="match status" value="1"/>
</dbReference>
<dbReference type="FunFam" id="3.30.230.40:FF:000001">
    <property type="entry name" value="Imidazoleglycerol-phosphate dehydratase HisB"/>
    <property type="match status" value="1"/>
</dbReference>
<dbReference type="FunFam" id="3.30.230.40:FF:000003">
    <property type="entry name" value="Imidazoleglycerol-phosphate dehydratase HisB"/>
    <property type="match status" value="1"/>
</dbReference>
<dbReference type="Gene3D" id="3.40.50.1000">
    <property type="entry name" value="HAD superfamily/HAD-like"/>
    <property type="match status" value="1"/>
</dbReference>
<dbReference type="Gene3D" id="3.30.230.40">
    <property type="entry name" value="Imidazole glycerol phosphate dehydratase, domain 1"/>
    <property type="match status" value="2"/>
</dbReference>
<dbReference type="HAMAP" id="MF_01022">
    <property type="entry name" value="Bifunc_HisB"/>
    <property type="match status" value="1"/>
</dbReference>
<dbReference type="HAMAP" id="MF_00076">
    <property type="entry name" value="HisB"/>
    <property type="match status" value="1"/>
</dbReference>
<dbReference type="InterPro" id="IPR036412">
    <property type="entry name" value="HAD-like_sf"/>
</dbReference>
<dbReference type="InterPro" id="IPR006549">
    <property type="entry name" value="HAD-SF_hydro_IIIA"/>
</dbReference>
<dbReference type="InterPro" id="IPR023214">
    <property type="entry name" value="HAD_sf"/>
</dbReference>
<dbReference type="InterPro" id="IPR020566">
    <property type="entry name" value="His_synth_bifunc_HisB"/>
</dbReference>
<dbReference type="InterPro" id="IPR005954">
    <property type="entry name" value="HisB_N"/>
</dbReference>
<dbReference type="InterPro" id="IPR006543">
    <property type="entry name" value="Histidinol-phos"/>
</dbReference>
<dbReference type="InterPro" id="IPR038494">
    <property type="entry name" value="IGPD_sf"/>
</dbReference>
<dbReference type="InterPro" id="IPR000807">
    <property type="entry name" value="ImidazoleglycerolP_deHydtase"/>
</dbReference>
<dbReference type="InterPro" id="IPR020565">
    <property type="entry name" value="ImidazoleglycerP_deHydtase_CS"/>
</dbReference>
<dbReference type="InterPro" id="IPR020568">
    <property type="entry name" value="Ribosomal_Su5_D2-typ_SF"/>
</dbReference>
<dbReference type="NCBIfam" id="TIGR01662">
    <property type="entry name" value="HAD-SF-IIIA"/>
    <property type="match status" value="1"/>
</dbReference>
<dbReference type="NCBIfam" id="TIGR01261">
    <property type="entry name" value="hisB_Nterm"/>
    <property type="match status" value="1"/>
</dbReference>
<dbReference type="NCBIfam" id="TIGR01656">
    <property type="entry name" value="Histidinol-ppas"/>
    <property type="match status" value="1"/>
</dbReference>
<dbReference type="NCBIfam" id="NF003937">
    <property type="entry name" value="PRK05446.1"/>
    <property type="match status" value="1"/>
</dbReference>
<dbReference type="PANTHER" id="PTHR23133:SF2">
    <property type="entry name" value="IMIDAZOLEGLYCEROL-PHOSPHATE DEHYDRATASE"/>
    <property type="match status" value="1"/>
</dbReference>
<dbReference type="PANTHER" id="PTHR23133">
    <property type="entry name" value="IMIDAZOLEGLYCEROL-PHOSPHATE DEHYDRATASE HIS7"/>
    <property type="match status" value="1"/>
</dbReference>
<dbReference type="Pfam" id="PF13242">
    <property type="entry name" value="Hydrolase_like"/>
    <property type="match status" value="1"/>
</dbReference>
<dbReference type="Pfam" id="PF00475">
    <property type="entry name" value="IGPD"/>
    <property type="match status" value="1"/>
</dbReference>
<dbReference type="SUPFAM" id="SSF56784">
    <property type="entry name" value="HAD-like"/>
    <property type="match status" value="1"/>
</dbReference>
<dbReference type="SUPFAM" id="SSF54211">
    <property type="entry name" value="Ribosomal protein S5 domain 2-like"/>
    <property type="match status" value="2"/>
</dbReference>
<dbReference type="PROSITE" id="PS00954">
    <property type="entry name" value="IGP_DEHYDRATASE_1"/>
    <property type="match status" value="1"/>
</dbReference>
<dbReference type="PROSITE" id="PS00955">
    <property type="entry name" value="IGP_DEHYDRATASE_2"/>
    <property type="match status" value="1"/>
</dbReference>
<gene>
    <name evidence="1" type="primary">hisB</name>
    <name type="ordered locus">XfasM23_1350</name>
</gene>
<name>HIS7_XYLF2</name>
<feature type="chain" id="PRO_1000135374" description="Histidine biosynthesis bifunctional protein HisB">
    <location>
        <begin position="1"/>
        <end position="375"/>
    </location>
</feature>
<feature type="region of interest" description="Histidinol-phosphatase" evidence="1">
    <location>
        <begin position="1"/>
        <end position="168"/>
    </location>
</feature>
<feature type="region of interest" description="Imidazoleglycerol-phosphate dehydratase" evidence="1">
    <location>
        <begin position="169"/>
        <end position="375"/>
    </location>
</feature>
<feature type="active site" description="Nucleophile" evidence="1">
    <location>
        <position position="8"/>
    </location>
</feature>
<feature type="active site" description="Proton donor" evidence="1">
    <location>
        <position position="10"/>
    </location>
</feature>
<feature type="binding site" evidence="1">
    <location>
        <position position="8"/>
    </location>
    <ligand>
        <name>Mg(2+)</name>
        <dbReference type="ChEBI" id="CHEBI:18420"/>
    </ligand>
</feature>
<feature type="binding site" evidence="1">
    <location>
        <position position="10"/>
    </location>
    <ligand>
        <name>Mg(2+)</name>
        <dbReference type="ChEBI" id="CHEBI:18420"/>
    </ligand>
</feature>
<feature type="binding site" evidence="1">
    <location>
        <position position="128"/>
    </location>
    <ligand>
        <name>Mg(2+)</name>
        <dbReference type="ChEBI" id="CHEBI:18420"/>
    </ligand>
</feature>
<protein>
    <recommendedName>
        <fullName evidence="1">Histidine biosynthesis bifunctional protein HisB</fullName>
    </recommendedName>
    <domain>
        <recommendedName>
            <fullName evidence="1">Histidinol-phosphatase</fullName>
            <ecNumber evidence="1">3.1.3.15</ecNumber>
        </recommendedName>
    </domain>
    <domain>
        <recommendedName>
            <fullName evidence="1">Imidazoleglycerol-phosphate dehydratase</fullName>
            <shortName evidence="1">IGPD</shortName>
            <ecNumber evidence="1">4.2.1.19</ecNumber>
        </recommendedName>
    </domain>
</protein>
<comment type="catalytic activity">
    <reaction evidence="1">
        <text>D-erythro-1-(imidazol-4-yl)glycerol 3-phosphate = 3-(imidazol-4-yl)-2-oxopropyl phosphate + H2O</text>
        <dbReference type="Rhea" id="RHEA:11040"/>
        <dbReference type="ChEBI" id="CHEBI:15377"/>
        <dbReference type="ChEBI" id="CHEBI:57766"/>
        <dbReference type="ChEBI" id="CHEBI:58278"/>
        <dbReference type="EC" id="4.2.1.19"/>
    </reaction>
</comment>
<comment type="catalytic activity">
    <reaction evidence="1">
        <text>L-histidinol phosphate + H2O = L-histidinol + phosphate</text>
        <dbReference type="Rhea" id="RHEA:14465"/>
        <dbReference type="ChEBI" id="CHEBI:15377"/>
        <dbReference type="ChEBI" id="CHEBI:43474"/>
        <dbReference type="ChEBI" id="CHEBI:57699"/>
        <dbReference type="ChEBI" id="CHEBI:57980"/>
        <dbReference type="EC" id="3.1.3.15"/>
    </reaction>
</comment>
<comment type="cofactor">
    <cofactor evidence="1">
        <name>Mg(2+)</name>
        <dbReference type="ChEBI" id="CHEBI:18420"/>
    </cofactor>
</comment>
<comment type="pathway">
    <text evidence="1">Amino-acid biosynthesis; L-histidine biosynthesis; L-histidine from 5-phospho-alpha-D-ribose 1-diphosphate: step 6/9.</text>
</comment>
<comment type="pathway">
    <text evidence="1">Amino-acid biosynthesis; L-histidine biosynthesis; L-histidine from 5-phospho-alpha-D-ribose 1-diphosphate: step 8/9.</text>
</comment>
<comment type="subcellular location">
    <subcellularLocation>
        <location evidence="1">Cytoplasm</location>
    </subcellularLocation>
</comment>
<comment type="similarity">
    <text evidence="1">In the N-terminal section; belongs to the histidinol-phosphatase family.</text>
</comment>
<comment type="similarity">
    <text evidence="1">In the C-terminal section; belongs to the imidazoleglycerol-phosphate dehydratase family.</text>
</comment>
<accession>B2I5X9</accession>